<evidence type="ECO:0000255" key="1">
    <source>
        <dbReference type="HAMAP-Rule" id="MF_00646"/>
    </source>
</evidence>
<accession>Q6D3L2</accession>
<gene>
    <name type="ordered locus">ECA2732</name>
</gene>
<organism>
    <name type="scientific">Pectobacterium atrosepticum (strain SCRI 1043 / ATCC BAA-672)</name>
    <name type="common">Erwinia carotovora subsp. atroseptica</name>
    <dbReference type="NCBI Taxonomy" id="218491"/>
    <lineage>
        <taxon>Bacteria</taxon>
        <taxon>Pseudomonadati</taxon>
        <taxon>Pseudomonadota</taxon>
        <taxon>Gammaproteobacteria</taxon>
        <taxon>Enterobacterales</taxon>
        <taxon>Pectobacteriaceae</taxon>
        <taxon>Pectobacterium</taxon>
    </lineage>
</organism>
<proteinExistence type="inferred from homology"/>
<name>EFPL_PECAS</name>
<comment type="similarity">
    <text evidence="1">Belongs to the elongation factor P family.</text>
</comment>
<keyword id="KW-1185">Reference proteome</keyword>
<protein>
    <recommendedName>
        <fullName evidence="1">Elongation factor P-like protein</fullName>
    </recommendedName>
</protein>
<reference key="1">
    <citation type="journal article" date="2004" name="Proc. Natl. Acad. Sci. U.S.A.">
        <title>Genome sequence of the enterobacterial phytopathogen Erwinia carotovora subsp. atroseptica and characterization of virulence factors.</title>
        <authorList>
            <person name="Bell K.S."/>
            <person name="Sebaihia M."/>
            <person name="Pritchard L."/>
            <person name="Holden M.T.G."/>
            <person name="Hyman L.J."/>
            <person name="Holeva M.C."/>
            <person name="Thomson N.R."/>
            <person name="Bentley S.D."/>
            <person name="Churcher L.J.C."/>
            <person name="Mungall K."/>
            <person name="Atkin R."/>
            <person name="Bason N."/>
            <person name="Brooks K."/>
            <person name="Chillingworth T."/>
            <person name="Clark K."/>
            <person name="Doggett J."/>
            <person name="Fraser A."/>
            <person name="Hance Z."/>
            <person name="Hauser H."/>
            <person name="Jagels K."/>
            <person name="Moule S."/>
            <person name="Norbertczak H."/>
            <person name="Ormond D."/>
            <person name="Price C."/>
            <person name="Quail M.A."/>
            <person name="Sanders M."/>
            <person name="Walker D."/>
            <person name="Whitehead S."/>
            <person name="Salmond G.P.C."/>
            <person name="Birch P.R.J."/>
            <person name="Parkhill J."/>
            <person name="Toth I.K."/>
        </authorList>
    </citation>
    <scope>NUCLEOTIDE SEQUENCE [LARGE SCALE GENOMIC DNA]</scope>
    <source>
        <strain>SCRI 1043 / ATCC BAA-672</strain>
    </source>
</reference>
<dbReference type="EMBL" id="BX950851">
    <property type="protein sequence ID" value="CAG75632.1"/>
    <property type="molecule type" value="Genomic_DNA"/>
</dbReference>
<dbReference type="SMR" id="Q6D3L2"/>
<dbReference type="STRING" id="218491.ECA2732"/>
<dbReference type="KEGG" id="eca:ECA2732"/>
<dbReference type="eggNOG" id="COG0231">
    <property type="taxonomic scope" value="Bacteria"/>
</dbReference>
<dbReference type="HOGENOM" id="CLU_074944_2_0_6"/>
<dbReference type="OrthoDB" id="5599402at2"/>
<dbReference type="Proteomes" id="UP000007966">
    <property type="component" value="Chromosome"/>
</dbReference>
<dbReference type="GO" id="GO:0005737">
    <property type="term" value="C:cytoplasm"/>
    <property type="evidence" value="ECO:0007669"/>
    <property type="project" value="InterPro"/>
</dbReference>
<dbReference type="GO" id="GO:0003746">
    <property type="term" value="F:translation elongation factor activity"/>
    <property type="evidence" value="ECO:0007669"/>
    <property type="project" value="UniProtKB-UniRule"/>
</dbReference>
<dbReference type="GO" id="GO:0043043">
    <property type="term" value="P:peptide biosynthetic process"/>
    <property type="evidence" value="ECO:0007669"/>
    <property type="project" value="InterPro"/>
</dbReference>
<dbReference type="CDD" id="cd04470">
    <property type="entry name" value="S1_EF-P_repeat_1"/>
    <property type="match status" value="1"/>
</dbReference>
<dbReference type="FunFam" id="2.40.50.140:FF:000004">
    <property type="entry name" value="Elongation factor P"/>
    <property type="match status" value="1"/>
</dbReference>
<dbReference type="FunFam" id="2.30.30.30:FF:000011">
    <property type="entry name" value="Elongation factor P-like protein"/>
    <property type="match status" value="1"/>
</dbReference>
<dbReference type="FunFam" id="2.40.50.140:FF:000053">
    <property type="entry name" value="Elongation factor P-like protein"/>
    <property type="match status" value="1"/>
</dbReference>
<dbReference type="Gene3D" id="2.30.30.30">
    <property type="match status" value="1"/>
</dbReference>
<dbReference type="Gene3D" id="2.40.50.140">
    <property type="entry name" value="Nucleic acid-binding proteins"/>
    <property type="match status" value="2"/>
</dbReference>
<dbReference type="HAMAP" id="MF_00646">
    <property type="entry name" value="EFP"/>
    <property type="match status" value="1"/>
</dbReference>
<dbReference type="InterPro" id="IPR015365">
    <property type="entry name" value="Elong-fact-P_C"/>
</dbReference>
<dbReference type="InterPro" id="IPR012340">
    <property type="entry name" value="NA-bd_OB-fold"/>
</dbReference>
<dbReference type="InterPro" id="IPR014722">
    <property type="entry name" value="Rib_uL2_dom2"/>
</dbReference>
<dbReference type="InterPro" id="IPR020599">
    <property type="entry name" value="Transl_elong_fac_P/YeiP"/>
</dbReference>
<dbReference type="InterPro" id="IPR013185">
    <property type="entry name" value="Transl_elong_KOW-like"/>
</dbReference>
<dbReference type="InterPro" id="IPR011897">
    <property type="entry name" value="Transl_elong_p-like_YeiP"/>
</dbReference>
<dbReference type="InterPro" id="IPR001059">
    <property type="entry name" value="Transl_elong_P/YeiP_cen"/>
</dbReference>
<dbReference type="InterPro" id="IPR013852">
    <property type="entry name" value="Transl_elong_P/YeiP_CS"/>
</dbReference>
<dbReference type="InterPro" id="IPR008991">
    <property type="entry name" value="Translation_prot_SH3-like_sf"/>
</dbReference>
<dbReference type="NCBIfam" id="NF001810">
    <property type="entry name" value="PRK00529.1"/>
    <property type="match status" value="1"/>
</dbReference>
<dbReference type="NCBIfam" id="NF003392">
    <property type="entry name" value="PRK04542.1"/>
    <property type="match status" value="1"/>
</dbReference>
<dbReference type="NCBIfam" id="TIGR02178">
    <property type="entry name" value="yeiP"/>
    <property type="match status" value="1"/>
</dbReference>
<dbReference type="PANTHER" id="PTHR30053">
    <property type="entry name" value="ELONGATION FACTOR P"/>
    <property type="match status" value="1"/>
</dbReference>
<dbReference type="PANTHER" id="PTHR30053:SF14">
    <property type="entry name" value="TRANSLATION ELONGATION FACTOR KOW-LIKE DOMAIN-CONTAINING PROTEIN"/>
    <property type="match status" value="1"/>
</dbReference>
<dbReference type="Pfam" id="PF01132">
    <property type="entry name" value="EFP"/>
    <property type="match status" value="1"/>
</dbReference>
<dbReference type="Pfam" id="PF08207">
    <property type="entry name" value="EFP_N"/>
    <property type="match status" value="1"/>
</dbReference>
<dbReference type="Pfam" id="PF09285">
    <property type="entry name" value="Elong-fact-P_C"/>
    <property type="match status" value="1"/>
</dbReference>
<dbReference type="PIRSF" id="PIRSF005901">
    <property type="entry name" value="EF-P"/>
    <property type="match status" value="1"/>
</dbReference>
<dbReference type="SMART" id="SM01185">
    <property type="entry name" value="EFP"/>
    <property type="match status" value="1"/>
</dbReference>
<dbReference type="SMART" id="SM00841">
    <property type="entry name" value="Elong-fact-P_C"/>
    <property type="match status" value="1"/>
</dbReference>
<dbReference type="SUPFAM" id="SSF50249">
    <property type="entry name" value="Nucleic acid-binding proteins"/>
    <property type="match status" value="2"/>
</dbReference>
<dbReference type="SUPFAM" id="SSF50104">
    <property type="entry name" value="Translation proteins SH3-like domain"/>
    <property type="match status" value="1"/>
</dbReference>
<dbReference type="PROSITE" id="PS01275">
    <property type="entry name" value="EFP"/>
    <property type="match status" value="1"/>
</dbReference>
<sequence length="190" mass="21380">MARANEIKRGMVVNYNDKLLLVKDIDVQSPSARGASTLYKMRFSDVRTGLKVEERFKGDDIIDTITLTRRTVTFSYIDGDEYVFMDDEDYAPYLFKKDQIEEELLFIPEGGMPGIQVLSWDGQIIALELPQTVDLEIIETAPGIKGASASSRNKPATMSTGLVIPVPEYLSAGEKIRIHIPERRYMGRAD</sequence>
<feature type="chain" id="PRO_0000094382" description="Elongation factor P-like protein">
    <location>
        <begin position="1"/>
        <end position="190"/>
    </location>
</feature>